<gene>
    <name evidence="1" type="primary">rplO</name>
    <name type="ordered locus">BURPS668_3727</name>
</gene>
<dbReference type="EMBL" id="CP000570">
    <property type="protein sequence ID" value="ABN83884.1"/>
    <property type="molecule type" value="Genomic_DNA"/>
</dbReference>
<dbReference type="RefSeq" id="WP_004197941.1">
    <property type="nucleotide sequence ID" value="NC_009074.1"/>
</dbReference>
<dbReference type="SMR" id="A3NEG0"/>
<dbReference type="GeneID" id="92980300"/>
<dbReference type="KEGG" id="bpd:BURPS668_3727"/>
<dbReference type="HOGENOM" id="CLU_055188_4_2_4"/>
<dbReference type="GO" id="GO:0022625">
    <property type="term" value="C:cytosolic large ribosomal subunit"/>
    <property type="evidence" value="ECO:0007669"/>
    <property type="project" value="TreeGrafter"/>
</dbReference>
<dbReference type="GO" id="GO:0019843">
    <property type="term" value="F:rRNA binding"/>
    <property type="evidence" value="ECO:0007669"/>
    <property type="project" value="UniProtKB-UniRule"/>
</dbReference>
<dbReference type="GO" id="GO:0003735">
    <property type="term" value="F:structural constituent of ribosome"/>
    <property type="evidence" value="ECO:0007669"/>
    <property type="project" value="InterPro"/>
</dbReference>
<dbReference type="GO" id="GO:0006412">
    <property type="term" value="P:translation"/>
    <property type="evidence" value="ECO:0007669"/>
    <property type="project" value="UniProtKB-UniRule"/>
</dbReference>
<dbReference type="Gene3D" id="3.100.10.10">
    <property type="match status" value="1"/>
</dbReference>
<dbReference type="HAMAP" id="MF_01341">
    <property type="entry name" value="Ribosomal_uL15"/>
    <property type="match status" value="1"/>
</dbReference>
<dbReference type="InterPro" id="IPR030878">
    <property type="entry name" value="Ribosomal_uL15"/>
</dbReference>
<dbReference type="InterPro" id="IPR021131">
    <property type="entry name" value="Ribosomal_uL15/eL18"/>
</dbReference>
<dbReference type="InterPro" id="IPR036227">
    <property type="entry name" value="Ribosomal_uL15/eL18_sf"/>
</dbReference>
<dbReference type="InterPro" id="IPR005749">
    <property type="entry name" value="Ribosomal_uL15_bac-type"/>
</dbReference>
<dbReference type="InterPro" id="IPR001196">
    <property type="entry name" value="Ribosomal_uL15_CS"/>
</dbReference>
<dbReference type="NCBIfam" id="TIGR01071">
    <property type="entry name" value="rplO_bact"/>
    <property type="match status" value="1"/>
</dbReference>
<dbReference type="PANTHER" id="PTHR12934">
    <property type="entry name" value="50S RIBOSOMAL PROTEIN L15"/>
    <property type="match status" value="1"/>
</dbReference>
<dbReference type="PANTHER" id="PTHR12934:SF11">
    <property type="entry name" value="LARGE RIBOSOMAL SUBUNIT PROTEIN UL15M"/>
    <property type="match status" value="1"/>
</dbReference>
<dbReference type="Pfam" id="PF00828">
    <property type="entry name" value="Ribosomal_L27A"/>
    <property type="match status" value="1"/>
</dbReference>
<dbReference type="SUPFAM" id="SSF52080">
    <property type="entry name" value="Ribosomal proteins L15p and L18e"/>
    <property type="match status" value="1"/>
</dbReference>
<dbReference type="PROSITE" id="PS00475">
    <property type="entry name" value="RIBOSOMAL_L15"/>
    <property type="match status" value="1"/>
</dbReference>
<keyword id="KW-0687">Ribonucleoprotein</keyword>
<keyword id="KW-0689">Ribosomal protein</keyword>
<keyword id="KW-0694">RNA-binding</keyword>
<keyword id="KW-0699">rRNA-binding</keyword>
<reference key="1">
    <citation type="journal article" date="2010" name="Genome Biol. Evol.">
        <title>Continuing evolution of Burkholderia mallei through genome reduction and large-scale rearrangements.</title>
        <authorList>
            <person name="Losada L."/>
            <person name="Ronning C.M."/>
            <person name="DeShazer D."/>
            <person name="Woods D."/>
            <person name="Fedorova N."/>
            <person name="Kim H.S."/>
            <person name="Shabalina S.A."/>
            <person name="Pearson T.R."/>
            <person name="Brinkac L."/>
            <person name="Tan P."/>
            <person name="Nandi T."/>
            <person name="Crabtree J."/>
            <person name="Badger J."/>
            <person name="Beckstrom-Sternberg S."/>
            <person name="Saqib M."/>
            <person name="Schutzer S.E."/>
            <person name="Keim P."/>
            <person name="Nierman W.C."/>
        </authorList>
    </citation>
    <scope>NUCLEOTIDE SEQUENCE [LARGE SCALE GENOMIC DNA]</scope>
    <source>
        <strain>668</strain>
    </source>
</reference>
<evidence type="ECO:0000255" key="1">
    <source>
        <dbReference type="HAMAP-Rule" id="MF_01341"/>
    </source>
</evidence>
<evidence type="ECO:0000256" key="2">
    <source>
        <dbReference type="SAM" id="MobiDB-lite"/>
    </source>
</evidence>
<evidence type="ECO:0000305" key="3"/>
<accession>A3NEG0</accession>
<organism>
    <name type="scientific">Burkholderia pseudomallei (strain 668)</name>
    <dbReference type="NCBI Taxonomy" id="320373"/>
    <lineage>
        <taxon>Bacteria</taxon>
        <taxon>Pseudomonadati</taxon>
        <taxon>Pseudomonadota</taxon>
        <taxon>Betaproteobacteria</taxon>
        <taxon>Burkholderiales</taxon>
        <taxon>Burkholderiaceae</taxon>
        <taxon>Burkholderia</taxon>
        <taxon>pseudomallei group</taxon>
    </lineage>
</organism>
<feature type="chain" id="PRO_1000054441" description="Large ribosomal subunit protein uL15">
    <location>
        <begin position="1"/>
        <end position="144"/>
    </location>
</feature>
<feature type="region of interest" description="Disordered" evidence="2">
    <location>
        <begin position="1"/>
        <end position="56"/>
    </location>
</feature>
<feature type="compositionally biased region" description="Gly residues" evidence="2">
    <location>
        <begin position="21"/>
        <end position="31"/>
    </location>
</feature>
<comment type="function">
    <text evidence="1">Binds to the 23S rRNA.</text>
</comment>
<comment type="subunit">
    <text evidence="1">Part of the 50S ribosomal subunit.</text>
</comment>
<comment type="similarity">
    <text evidence="1">Belongs to the universal ribosomal protein uL15 family.</text>
</comment>
<proteinExistence type="inferred from homology"/>
<name>RL15_BURP6</name>
<protein>
    <recommendedName>
        <fullName evidence="1">Large ribosomal subunit protein uL15</fullName>
    </recommendedName>
    <alternativeName>
        <fullName evidence="3">50S ribosomal protein L15</fullName>
    </alternativeName>
</protein>
<sequence length="144" mass="15136">MELNNLKPAEGAKHAKRRVGRGIGSGLGKTAGRGHKGQKSRSGGFHKVGFEGGQMPLQRRLPKRGFTSLTKEFVGEVRLGDLEKLPVDEIDLLALKQAGLVGELIKSAKIIATGELKRKIVVKGLGATKGARAAIEAAGGSFAE</sequence>